<gene>
    <name evidence="1" type="primary">idi</name>
    <name type="ordered locus">MT1787</name>
</gene>
<accession>P9WKK4</accession>
<accession>L0T7J8</accession>
<accession>O08150</accession>
<accession>P72002</accession>
<reference key="1">
    <citation type="journal article" date="2002" name="J. Bacteriol.">
        <title>Whole-genome comparison of Mycobacterium tuberculosis clinical and laboratory strains.</title>
        <authorList>
            <person name="Fleischmann R.D."/>
            <person name="Alland D."/>
            <person name="Eisen J.A."/>
            <person name="Carpenter L."/>
            <person name="White O."/>
            <person name="Peterson J.D."/>
            <person name="DeBoy R.T."/>
            <person name="Dodson R.J."/>
            <person name="Gwinn M.L."/>
            <person name="Haft D.H."/>
            <person name="Hickey E.K."/>
            <person name="Kolonay J.F."/>
            <person name="Nelson W.C."/>
            <person name="Umayam L.A."/>
            <person name="Ermolaeva M.D."/>
            <person name="Salzberg S.L."/>
            <person name="Delcher A."/>
            <person name="Utterback T.R."/>
            <person name="Weidman J.F."/>
            <person name="Khouri H.M."/>
            <person name="Gill J."/>
            <person name="Mikula A."/>
            <person name="Bishai W."/>
            <person name="Jacobs W.R. Jr."/>
            <person name="Venter J.C."/>
            <person name="Fraser C.M."/>
        </authorList>
    </citation>
    <scope>NUCLEOTIDE SEQUENCE [LARGE SCALE GENOMIC DNA]</scope>
    <source>
        <strain>CDC 1551 / Oshkosh</strain>
    </source>
</reference>
<name>IDI_MYCTO</name>
<keyword id="KW-0963">Cytoplasm</keyword>
<keyword id="KW-0413">Isomerase</keyword>
<keyword id="KW-0414">Isoprene biosynthesis</keyword>
<keyword id="KW-0460">Magnesium</keyword>
<keyword id="KW-0464">Manganese</keyword>
<keyword id="KW-0479">Metal-binding</keyword>
<keyword id="KW-1185">Reference proteome</keyword>
<dbReference type="EC" id="5.3.3.2" evidence="1"/>
<dbReference type="EMBL" id="AE000516">
    <property type="protein sequence ID" value="AAK46060.1"/>
    <property type="molecule type" value="Genomic_DNA"/>
</dbReference>
<dbReference type="PIR" id="B70986">
    <property type="entry name" value="B70986"/>
</dbReference>
<dbReference type="RefSeq" id="WP_003898999.1">
    <property type="nucleotide sequence ID" value="NZ_KK341227.1"/>
</dbReference>
<dbReference type="SMR" id="P9WKK4"/>
<dbReference type="GeneID" id="45425718"/>
<dbReference type="KEGG" id="mtc:MT1787"/>
<dbReference type="PATRIC" id="fig|83331.31.peg.1919"/>
<dbReference type="HOGENOM" id="CLU_060552_2_0_11"/>
<dbReference type="UniPathway" id="UPA00059">
    <property type="reaction ID" value="UER00104"/>
</dbReference>
<dbReference type="Proteomes" id="UP000001020">
    <property type="component" value="Chromosome"/>
</dbReference>
<dbReference type="GO" id="GO:0005737">
    <property type="term" value="C:cytoplasm"/>
    <property type="evidence" value="ECO:0007669"/>
    <property type="project" value="UniProtKB-SubCell"/>
</dbReference>
<dbReference type="GO" id="GO:0004452">
    <property type="term" value="F:isopentenyl-diphosphate delta-isomerase activity"/>
    <property type="evidence" value="ECO:0007669"/>
    <property type="project" value="UniProtKB-UniRule"/>
</dbReference>
<dbReference type="GO" id="GO:0046872">
    <property type="term" value="F:metal ion binding"/>
    <property type="evidence" value="ECO:0007669"/>
    <property type="project" value="UniProtKB-KW"/>
</dbReference>
<dbReference type="GO" id="GO:0050992">
    <property type="term" value="P:dimethylallyl diphosphate biosynthetic process"/>
    <property type="evidence" value="ECO:0007669"/>
    <property type="project" value="UniProtKB-UniRule"/>
</dbReference>
<dbReference type="GO" id="GO:0008299">
    <property type="term" value="P:isoprenoid biosynthetic process"/>
    <property type="evidence" value="ECO:0007669"/>
    <property type="project" value="UniProtKB-KW"/>
</dbReference>
<dbReference type="CDD" id="cd02885">
    <property type="entry name" value="NUDIX_IPP_Isomerase"/>
    <property type="match status" value="1"/>
</dbReference>
<dbReference type="FunFam" id="3.90.79.10:FF:000009">
    <property type="entry name" value="Isopentenyl-diphosphate Delta-isomerase"/>
    <property type="match status" value="1"/>
</dbReference>
<dbReference type="Gene3D" id="3.90.79.10">
    <property type="entry name" value="Nucleoside Triphosphate Pyrophosphohydrolase"/>
    <property type="match status" value="1"/>
</dbReference>
<dbReference type="HAMAP" id="MF_00202">
    <property type="entry name" value="Idi"/>
    <property type="match status" value="1"/>
</dbReference>
<dbReference type="InterPro" id="IPR056375">
    <property type="entry name" value="Idi_bact"/>
</dbReference>
<dbReference type="InterPro" id="IPR011876">
    <property type="entry name" value="IsopentenylPP_isomerase_typ1"/>
</dbReference>
<dbReference type="InterPro" id="IPR015797">
    <property type="entry name" value="NUDIX_hydrolase-like_dom_sf"/>
</dbReference>
<dbReference type="InterPro" id="IPR000086">
    <property type="entry name" value="NUDIX_hydrolase_dom"/>
</dbReference>
<dbReference type="NCBIfam" id="TIGR02150">
    <property type="entry name" value="IPP_isom_1"/>
    <property type="match status" value="1"/>
</dbReference>
<dbReference type="NCBIfam" id="NF002995">
    <property type="entry name" value="PRK03759.1"/>
    <property type="match status" value="1"/>
</dbReference>
<dbReference type="PANTHER" id="PTHR10885">
    <property type="entry name" value="ISOPENTENYL-DIPHOSPHATE DELTA-ISOMERASE"/>
    <property type="match status" value="1"/>
</dbReference>
<dbReference type="PANTHER" id="PTHR10885:SF0">
    <property type="entry name" value="ISOPENTENYL-DIPHOSPHATE DELTA-ISOMERASE"/>
    <property type="match status" value="1"/>
</dbReference>
<dbReference type="Pfam" id="PF00293">
    <property type="entry name" value="NUDIX"/>
    <property type="match status" value="1"/>
</dbReference>
<dbReference type="PIRSF" id="PIRSF018427">
    <property type="entry name" value="Isopntndiph_ism"/>
    <property type="match status" value="1"/>
</dbReference>
<dbReference type="SUPFAM" id="SSF55811">
    <property type="entry name" value="Nudix"/>
    <property type="match status" value="1"/>
</dbReference>
<dbReference type="PROSITE" id="PS51462">
    <property type="entry name" value="NUDIX"/>
    <property type="match status" value="1"/>
</dbReference>
<evidence type="ECO:0000255" key="1">
    <source>
        <dbReference type="HAMAP-Rule" id="MF_00202"/>
    </source>
</evidence>
<protein>
    <recommendedName>
        <fullName evidence="1">Isopentenyl-diphosphate Delta-isomerase</fullName>
        <shortName evidence="1">IPP isomerase</shortName>
        <ecNumber evidence="1">5.3.3.2</ecNumber>
    </recommendedName>
    <alternativeName>
        <fullName evidence="1">IPP:DMAPP isomerase</fullName>
    </alternativeName>
    <alternativeName>
        <fullName evidence="1">Isopentenyl pyrophosphate isomerase</fullName>
    </alternativeName>
</protein>
<comment type="function">
    <text evidence="1">Catalyzes the 1,3-allylic rearrangement of the homoallylic substrate isopentenyl (IPP) to its highly electrophilic allylic isomer, dimethylallyl diphosphate (DMAPP).</text>
</comment>
<comment type="catalytic activity">
    <reaction evidence="1">
        <text>isopentenyl diphosphate = dimethylallyl diphosphate</text>
        <dbReference type="Rhea" id="RHEA:23284"/>
        <dbReference type="ChEBI" id="CHEBI:57623"/>
        <dbReference type="ChEBI" id="CHEBI:128769"/>
        <dbReference type="EC" id="5.3.3.2"/>
    </reaction>
</comment>
<comment type="cofactor">
    <cofactor evidence="1">
        <name>Mg(2+)</name>
        <dbReference type="ChEBI" id="CHEBI:18420"/>
    </cofactor>
    <text evidence="1">Binds 1 Mg(2+) ion per subunit. The magnesium ion binds only when substrate is bound.</text>
</comment>
<comment type="cofactor">
    <cofactor evidence="1">
        <name>Mn(2+)</name>
        <dbReference type="ChEBI" id="CHEBI:29035"/>
    </cofactor>
    <text evidence="1">Binds 1 Mn(2+) ion per subunit.</text>
</comment>
<comment type="pathway">
    <text evidence="1">Isoprenoid biosynthesis; dimethylallyl diphosphate biosynthesis; dimethylallyl diphosphate from isopentenyl diphosphate: step 1/1.</text>
</comment>
<comment type="subcellular location">
    <subcellularLocation>
        <location evidence="1">Cytoplasm</location>
    </subcellularLocation>
</comment>
<comment type="similarity">
    <text evidence="1">Belongs to the IPP isomerase type 1 family.</text>
</comment>
<proteinExistence type="inferred from homology"/>
<organism>
    <name type="scientific">Mycobacterium tuberculosis (strain CDC 1551 / Oshkosh)</name>
    <dbReference type="NCBI Taxonomy" id="83331"/>
    <lineage>
        <taxon>Bacteria</taxon>
        <taxon>Bacillati</taxon>
        <taxon>Actinomycetota</taxon>
        <taxon>Actinomycetes</taxon>
        <taxon>Mycobacteriales</taxon>
        <taxon>Mycobacteriaceae</taxon>
        <taxon>Mycobacterium</taxon>
        <taxon>Mycobacterium tuberculosis complex</taxon>
    </lineage>
</organism>
<sequence>MTRSYRPAPPIERVVLLNDRGDATGVADKATVHTGDTPLHLAFSSYVFDLHDQLLITRRAATKRTWPAVWTNSCCGHPLPGESLPGAIRRRLAAELGLTPDRVDLILPGFRYRAAMADGTVENEICPVYRVQVDQQPRPNSDEVDAIRWLSWEQFVRDVTAGVIAPVSPWCRSQLGYLTKLGPCPAQWPVADDCRLPKAAHGN</sequence>
<feature type="chain" id="PRO_0000427638" description="Isopentenyl-diphosphate Delta-isomerase">
    <location>
        <begin position="1"/>
        <end position="203"/>
    </location>
</feature>
<feature type="domain" description="Nudix hydrolase">
    <location>
        <begin position="38"/>
        <end position="172"/>
    </location>
</feature>
<feature type="active site" evidence="1">
    <location>
        <position position="75"/>
    </location>
</feature>
<feature type="active site" evidence="1">
    <location>
        <position position="124"/>
    </location>
</feature>
<feature type="binding site" evidence="1">
    <location>
        <position position="33"/>
    </location>
    <ligand>
        <name>Mn(2+)</name>
        <dbReference type="ChEBI" id="CHEBI:29035"/>
    </ligand>
</feature>
<feature type="binding site" evidence="1">
    <location>
        <position position="40"/>
    </location>
    <ligand>
        <name>Mn(2+)</name>
        <dbReference type="ChEBI" id="CHEBI:29035"/>
    </ligand>
</feature>
<feature type="binding site" evidence="1">
    <location>
        <position position="75"/>
    </location>
    <ligand>
        <name>Mg(2+)</name>
        <dbReference type="ChEBI" id="CHEBI:18420"/>
    </ligand>
</feature>
<feature type="binding site" evidence="1">
    <location>
        <position position="77"/>
    </location>
    <ligand>
        <name>Mn(2+)</name>
        <dbReference type="ChEBI" id="CHEBI:29035"/>
    </ligand>
</feature>
<feature type="binding site" evidence="1">
    <location>
        <position position="95"/>
    </location>
    <ligand>
        <name>Mg(2+)</name>
        <dbReference type="ChEBI" id="CHEBI:18420"/>
    </ligand>
</feature>
<feature type="binding site" evidence="1">
    <location>
        <position position="122"/>
    </location>
    <ligand>
        <name>Mn(2+)</name>
        <dbReference type="ChEBI" id="CHEBI:29035"/>
    </ligand>
</feature>
<feature type="binding site" evidence="1">
    <location>
        <position position="124"/>
    </location>
    <ligand>
        <name>Mn(2+)</name>
        <dbReference type="ChEBI" id="CHEBI:29035"/>
    </ligand>
</feature>